<evidence type="ECO:0000255" key="1">
    <source>
        <dbReference type="HAMAP-Rule" id="MF_01310"/>
    </source>
</evidence>
<evidence type="ECO:0000305" key="2"/>
<keyword id="KW-0687">Ribonucleoprotein</keyword>
<keyword id="KW-0689">Ribosomal protein</keyword>
<keyword id="KW-0694">RNA-binding</keyword>
<keyword id="KW-0699">rRNA-binding</keyword>
<dbReference type="EMBL" id="CP000653">
    <property type="protein sequence ID" value="ABP62385.1"/>
    <property type="molecule type" value="Genomic_DNA"/>
</dbReference>
<dbReference type="RefSeq" id="WP_003863312.1">
    <property type="nucleotide sequence ID" value="NC_009436.1"/>
</dbReference>
<dbReference type="SMR" id="A4WFA5"/>
<dbReference type="STRING" id="399742.Ent638_3728"/>
<dbReference type="GeneID" id="97442837"/>
<dbReference type="KEGG" id="ent:Ent638_3728"/>
<dbReference type="eggNOG" id="COG0100">
    <property type="taxonomic scope" value="Bacteria"/>
</dbReference>
<dbReference type="HOGENOM" id="CLU_072439_5_0_6"/>
<dbReference type="OrthoDB" id="9806415at2"/>
<dbReference type="Proteomes" id="UP000000230">
    <property type="component" value="Chromosome"/>
</dbReference>
<dbReference type="GO" id="GO:1990904">
    <property type="term" value="C:ribonucleoprotein complex"/>
    <property type="evidence" value="ECO:0007669"/>
    <property type="project" value="UniProtKB-KW"/>
</dbReference>
<dbReference type="GO" id="GO:0005840">
    <property type="term" value="C:ribosome"/>
    <property type="evidence" value="ECO:0007669"/>
    <property type="project" value="UniProtKB-KW"/>
</dbReference>
<dbReference type="GO" id="GO:0019843">
    <property type="term" value="F:rRNA binding"/>
    <property type="evidence" value="ECO:0007669"/>
    <property type="project" value="UniProtKB-UniRule"/>
</dbReference>
<dbReference type="GO" id="GO:0003735">
    <property type="term" value="F:structural constituent of ribosome"/>
    <property type="evidence" value="ECO:0007669"/>
    <property type="project" value="InterPro"/>
</dbReference>
<dbReference type="GO" id="GO:0006412">
    <property type="term" value="P:translation"/>
    <property type="evidence" value="ECO:0007669"/>
    <property type="project" value="UniProtKB-UniRule"/>
</dbReference>
<dbReference type="FunFam" id="3.30.420.80:FF:000001">
    <property type="entry name" value="30S ribosomal protein S11"/>
    <property type="match status" value="1"/>
</dbReference>
<dbReference type="Gene3D" id="3.30.420.80">
    <property type="entry name" value="Ribosomal protein S11"/>
    <property type="match status" value="1"/>
</dbReference>
<dbReference type="HAMAP" id="MF_01310">
    <property type="entry name" value="Ribosomal_uS11"/>
    <property type="match status" value="1"/>
</dbReference>
<dbReference type="InterPro" id="IPR001971">
    <property type="entry name" value="Ribosomal_uS11"/>
</dbReference>
<dbReference type="InterPro" id="IPR019981">
    <property type="entry name" value="Ribosomal_uS11_bac-type"/>
</dbReference>
<dbReference type="InterPro" id="IPR018102">
    <property type="entry name" value="Ribosomal_uS11_CS"/>
</dbReference>
<dbReference type="InterPro" id="IPR036967">
    <property type="entry name" value="Ribosomal_uS11_sf"/>
</dbReference>
<dbReference type="NCBIfam" id="NF003698">
    <property type="entry name" value="PRK05309.1"/>
    <property type="match status" value="1"/>
</dbReference>
<dbReference type="NCBIfam" id="TIGR03632">
    <property type="entry name" value="uS11_bact"/>
    <property type="match status" value="1"/>
</dbReference>
<dbReference type="PANTHER" id="PTHR11759">
    <property type="entry name" value="40S RIBOSOMAL PROTEIN S14/30S RIBOSOMAL PROTEIN S11"/>
    <property type="match status" value="1"/>
</dbReference>
<dbReference type="Pfam" id="PF00411">
    <property type="entry name" value="Ribosomal_S11"/>
    <property type="match status" value="1"/>
</dbReference>
<dbReference type="PIRSF" id="PIRSF002131">
    <property type="entry name" value="Ribosomal_S11"/>
    <property type="match status" value="1"/>
</dbReference>
<dbReference type="SUPFAM" id="SSF53137">
    <property type="entry name" value="Translational machinery components"/>
    <property type="match status" value="1"/>
</dbReference>
<dbReference type="PROSITE" id="PS00054">
    <property type="entry name" value="RIBOSOMAL_S11"/>
    <property type="match status" value="1"/>
</dbReference>
<proteinExistence type="inferred from homology"/>
<feature type="chain" id="PRO_1000067502" description="Small ribosomal subunit protein uS11">
    <location>
        <begin position="1"/>
        <end position="129"/>
    </location>
</feature>
<protein>
    <recommendedName>
        <fullName evidence="1">Small ribosomal subunit protein uS11</fullName>
    </recommendedName>
    <alternativeName>
        <fullName evidence="2">30S ribosomal protein S11</fullName>
    </alternativeName>
</protein>
<gene>
    <name evidence="1" type="primary">rpsK</name>
    <name type="ordered locus">Ent638_3728</name>
</gene>
<organism>
    <name type="scientific">Enterobacter sp. (strain 638)</name>
    <dbReference type="NCBI Taxonomy" id="399742"/>
    <lineage>
        <taxon>Bacteria</taxon>
        <taxon>Pseudomonadati</taxon>
        <taxon>Pseudomonadota</taxon>
        <taxon>Gammaproteobacteria</taxon>
        <taxon>Enterobacterales</taxon>
        <taxon>Enterobacteriaceae</taxon>
        <taxon>Enterobacter</taxon>
    </lineage>
</organism>
<name>RS11_ENT38</name>
<sequence length="129" mass="13831">MAKAPVRARKRVRKQVSDGVAHIHASFNNTIVTITDRQGNALGWATAGGSGFRGSRKSTPFAAQVAAERCAEAVKEYGIKNLEVMVKGPGPGRESTVRALNAAGFRITNITDVTPIPHNGCRPPKKRRV</sequence>
<reference key="1">
    <citation type="journal article" date="2010" name="PLoS Genet.">
        <title>Genome sequence of the plant growth promoting endophytic bacterium Enterobacter sp. 638.</title>
        <authorList>
            <person name="Taghavi S."/>
            <person name="van der Lelie D."/>
            <person name="Hoffman A."/>
            <person name="Zhang Y.B."/>
            <person name="Walla M.D."/>
            <person name="Vangronsveld J."/>
            <person name="Newman L."/>
            <person name="Monchy S."/>
        </authorList>
    </citation>
    <scope>NUCLEOTIDE SEQUENCE [LARGE SCALE GENOMIC DNA]</scope>
    <source>
        <strain>638</strain>
    </source>
</reference>
<comment type="function">
    <text evidence="1">Located on the platform of the 30S subunit, it bridges several disparate RNA helices of the 16S rRNA. Forms part of the Shine-Dalgarno cleft in the 70S ribosome.</text>
</comment>
<comment type="subunit">
    <text evidence="1">Part of the 30S ribosomal subunit. Interacts with proteins S7 and S18. Binds to IF-3.</text>
</comment>
<comment type="similarity">
    <text evidence="1">Belongs to the universal ribosomal protein uS11 family.</text>
</comment>
<accession>A4WFA5</accession>